<dbReference type="EC" id="6.2.1.-" evidence="2"/>
<dbReference type="EMBL" id="AB969680">
    <property type="protein sequence ID" value="BBG74285.1"/>
    <property type="molecule type" value="Genomic_DNA"/>
</dbReference>
<dbReference type="SMR" id="A0A3G9H9I5"/>
<dbReference type="VEuPathDB" id="FungiDB:CC77DRAFT_940837"/>
<dbReference type="GO" id="GO:0005524">
    <property type="term" value="F:ATP binding"/>
    <property type="evidence" value="ECO:0007669"/>
    <property type="project" value="UniProtKB-KW"/>
</dbReference>
<dbReference type="GO" id="GO:0031956">
    <property type="term" value="F:medium-chain fatty acid-CoA ligase activity"/>
    <property type="evidence" value="ECO:0007669"/>
    <property type="project" value="TreeGrafter"/>
</dbReference>
<dbReference type="GO" id="GO:0006631">
    <property type="term" value="P:fatty acid metabolic process"/>
    <property type="evidence" value="ECO:0007669"/>
    <property type="project" value="TreeGrafter"/>
</dbReference>
<dbReference type="Gene3D" id="3.30.300.30">
    <property type="match status" value="1"/>
</dbReference>
<dbReference type="Gene3D" id="3.40.50.12780">
    <property type="entry name" value="N-terminal domain of ligase-like"/>
    <property type="match status" value="1"/>
</dbReference>
<dbReference type="InterPro" id="IPR025110">
    <property type="entry name" value="AMP-bd_C"/>
</dbReference>
<dbReference type="InterPro" id="IPR045851">
    <property type="entry name" value="AMP-bd_C_sf"/>
</dbReference>
<dbReference type="InterPro" id="IPR020845">
    <property type="entry name" value="AMP-binding_CS"/>
</dbReference>
<dbReference type="InterPro" id="IPR000873">
    <property type="entry name" value="AMP-dep_synth/lig_dom"/>
</dbReference>
<dbReference type="InterPro" id="IPR042099">
    <property type="entry name" value="ANL_N_sf"/>
</dbReference>
<dbReference type="PANTHER" id="PTHR43201">
    <property type="entry name" value="ACYL-COA SYNTHETASE"/>
    <property type="match status" value="1"/>
</dbReference>
<dbReference type="PANTHER" id="PTHR43201:SF5">
    <property type="entry name" value="MEDIUM-CHAIN ACYL-COA LIGASE ACSF2, MITOCHONDRIAL"/>
    <property type="match status" value="1"/>
</dbReference>
<dbReference type="Pfam" id="PF00501">
    <property type="entry name" value="AMP-binding"/>
    <property type="match status" value="1"/>
</dbReference>
<dbReference type="Pfam" id="PF13193">
    <property type="entry name" value="AMP-binding_C"/>
    <property type="match status" value="1"/>
</dbReference>
<dbReference type="SUPFAM" id="SSF56801">
    <property type="entry name" value="Acetyl-CoA synthetase-like"/>
    <property type="match status" value="1"/>
</dbReference>
<dbReference type="PROSITE" id="PS00455">
    <property type="entry name" value="AMP_BINDING"/>
    <property type="match status" value="1"/>
</dbReference>
<feature type="chain" id="PRO_0000449862" description="Acyl-CoA synthetase ALT10">
    <location>
        <begin position="1"/>
        <end position="566"/>
    </location>
</feature>
<feature type="region of interest" description="AMP-binding" evidence="3">
    <location>
        <begin position="473"/>
        <end position="551"/>
    </location>
</feature>
<feature type="binding site" evidence="3">
    <location>
        <begin position="196"/>
        <end position="207"/>
    </location>
    <ligand>
        <name>AMP</name>
        <dbReference type="ChEBI" id="CHEBI:456215"/>
    </ligand>
</feature>
<keyword id="KW-0067">ATP-binding</keyword>
<keyword id="KW-0436">Ligase</keyword>
<keyword id="KW-0547">Nucleotide-binding</keyword>
<evidence type="ECO:0000250" key="1">
    <source>
        <dbReference type="UniProtKB" id="Q8J2Q9"/>
    </source>
</evidence>
<evidence type="ECO:0000250" key="2">
    <source>
        <dbReference type="UniProtKB" id="Q8J2R0"/>
    </source>
</evidence>
<evidence type="ECO:0000255" key="3"/>
<evidence type="ECO:0000269" key="4">
    <source>
    </source>
</evidence>
<evidence type="ECO:0000269" key="5">
    <source>
    </source>
</evidence>
<evidence type="ECO:0000269" key="6">
    <source>
    </source>
</evidence>
<evidence type="ECO:0000269" key="7">
    <source ref="5"/>
</evidence>
<evidence type="ECO:0000303" key="8">
    <source ref="1"/>
</evidence>
<evidence type="ECO:0000305" key="9"/>
<evidence type="ECO:0000305" key="10">
    <source>
    </source>
</evidence>
<sequence>MTANVNVLVLPTHMRENDSAAIIIPSTRSAPQKEVSYKHLVAITDSLHRDLAHLGITKACKVAIVLPNGLEFVAVFLSVLRQRAVAAPLDAQLTESEFKDIFSRMKPELVIMLPIPPESSGGPCLPAPAMRAALGLTLRVALCRRTSDVKDGSGLGLQLALDLLEPAHSNHPAVAIVPKASAYSRDDVWSEDGALMLFTSGTTGAPKSVVLSHINLLVAMRIIIANHQLSSMDRTIIITPLHHIIGVCGSLLVTLFSGACAVIPDSLPGAFWQYCTEFGVTWFHAVPTLHRLLLKFPRTKDSMPPRLRFLRSGGSEMAPDLYETLKAFGVPVLEVYGMTETGPAIFCNHLDENGAGARQRSHYPIPDAVDVMILVSSDQPEGETYDKTSLQADQYSNLKMTKEPGVIGEVCVRGKNVMAGYINNSRANTEAFLPNGYFRTGDLGTIQSSGQLKLVGRLKEVINKGGIKIGPSEVEHAALSHESVSEAVCFRIADVMYGEEIGLAVKLRSNSGKNQCTDRDLKQHIRYQLSAFKVPKEIVFVDAVHYNRTGKPLRTQVSQKFAEGLL</sequence>
<name>ALT10_ALTAL</name>
<organism>
    <name type="scientific">Alternaria alternata</name>
    <name type="common">Alternaria rot fungus</name>
    <name type="synonym">Torula alternata</name>
    <dbReference type="NCBI Taxonomy" id="5599"/>
    <lineage>
        <taxon>Eukaryota</taxon>
        <taxon>Fungi</taxon>
        <taxon>Dikarya</taxon>
        <taxon>Ascomycota</taxon>
        <taxon>Pezizomycotina</taxon>
        <taxon>Dothideomycetes</taxon>
        <taxon>Pleosporomycetidae</taxon>
        <taxon>Pleosporales</taxon>
        <taxon>Pleosporineae</taxon>
        <taxon>Pleosporaceae</taxon>
        <taxon>Alternaria</taxon>
        <taxon>Alternaria sect. Alternaria</taxon>
        <taxon>Alternaria alternata complex</taxon>
    </lineage>
</organism>
<proteinExistence type="inferred from homology"/>
<protein>
    <recommendedName>
        <fullName evidence="1">Acyl-CoA synthetase ALT10</fullName>
        <ecNumber evidence="2">6.2.1.-</ecNumber>
    </recommendedName>
    <alternativeName>
        <fullName evidence="8">AAL-toxin biosynthesis cluster protein 10</fullName>
    </alternativeName>
</protein>
<comment type="function">
    <text evidence="4 5 6 7 10">Acyl-CoA synthetase; part of the gene cluster that mediates the biosynthesis of the host-selective toxins (HSTs) AAL-toxins, sphinganine-analog mycotoxins responsible for Alternaria stem canker on tomato by the tomato pathotype (PubMed:18435561, PubMed:19449880, PubMed:19749175). The biosynthesis starts with the polyketide synthase ALT1-catalyzed C-16 carbon chain assembly from one starter acetyl-CoA unit with malonyl-CoA extender units (PubMed:18435561, PubMed:19449880). ALT1 also selectively transfers methyl groups at the first and the third cycle of chain elongation for AAL toxin (PubMed:19449880). The C-16 polyketide chain is released from the enzyme by a nucleophilic attack of a carbanion, which is derived from R-carbon of glycin by decarboxylation, on the carbonyl carbon of polyketide acyl chain (Probable). This step is probably catalyzed by a pyridoxal 5'-phosphate-dependent aminoacyl transferase ALT4 (Probable). The respective functions of the other enzymes encoded by the cluster have still to be elucidated (Probable). The sphingosine N-acyltransferase-like protein ALT7 seems not to act as a resistance/self-tolerance factor against the toxin in the toxin biosynthetic gene cluster, contrary to what is expected (Ref.5).</text>
</comment>
<comment type="pathway">
    <text evidence="1">Mycotoxin biosynthesis.</text>
</comment>
<comment type="miscellaneous">
    <text evidence="6">Gene clusters encoding host-selective toxins (HSTs) are localized on conditionally dispensable chromosomes (CDCs), also called supernumerary chromosomes, where they are present in multiple copies. The CDCs are not essential for saprophytic growth but controls host-selective pathogenicity.</text>
</comment>
<comment type="similarity">
    <text evidence="9">Belongs to the ATP-dependent AMP-binding enzyme family.</text>
</comment>
<gene>
    <name evidence="8" type="primary">ALT10</name>
</gene>
<reference key="1">
    <citation type="submission" date="2014-06" db="EMBL/GenBank/DDBJ databases">
        <title>AAL-toxin biosynthetic genes cluster in the tomato pathotype of Alternaria alternata.</title>
        <authorList>
            <person name="Akagi Y."/>
            <person name="Akamatsu H."/>
            <person name="Takao K."/>
            <person name="Tsuge T."/>
            <person name="Kodama M."/>
        </authorList>
    </citation>
    <scope>NUCLEOTIDE SEQUENCE [GENOMIC DNA]</scope>
    <source>
        <strain>As-27</strain>
    </source>
</reference>
<reference key="2">
    <citation type="journal article" date="2008" name="J. Nat. Prod.">
        <title>Functional complementation of fumonisin biosynthesis in FUM1-disrupted fusarium verticillioides by the AAL-toxin polyketide synthase gene ALT1 from Alternaria alternata f. sp. Lycopersici.</title>
        <authorList>
            <person name="Zhu X."/>
            <person name="Vogeler C."/>
            <person name="Du L."/>
        </authorList>
    </citation>
    <scope>FUNCTION</scope>
</reference>
<reference key="3">
    <citation type="journal article" date="2009" name="Eukaryot. Cell">
        <title>Horizontal chromosome transfer, a mechanism for the evolution and differentiation of a plant-pathogenic fungus.</title>
        <authorList>
            <person name="Akagi Y."/>
            <person name="Akamatsu H."/>
            <person name="Otani H."/>
            <person name="Kodama M."/>
        </authorList>
    </citation>
    <scope>FUNCTION</scope>
</reference>
<reference key="4">
    <citation type="journal article" date="2009" name="J. Nat. Prod.">
        <title>Introduction of the AAL-toxin polyketide synthase gene ALT1 into FUM1-disrupted Fusarium verticillioides produces metabolites with the fumonisin methylation pattern.</title>
        <authorList>
            <person name="Li Y."/>
            <person name="Shen Y."/>
            <person name="Zhu X."/>
            <person name="Du L."/>
        </authorList>
    </citation>
    <scope>FUNCTION</scope>
</reference>
<reference key="5">
    <citation type="journal article" date="2012" name="J. Plant Pathol. Microbiol.">
        <title>Functional analysis of the ceramide synthase gene ALT7, a homolog of the disease resistance gene Asc1, in the plant pathogen Alternaria alternata.</title>
        <authorList>
            <person name="Kheder A.A."/>
            <person name="Akagi Y."/>
            <person name="Tsuge T."/>
            <person name="Kodama M."/>
        </authorList>
    </citation>
    <scope>FUNCTION</scope>
</reference>
<accession>A0A3G9H9I5</accession>